<protein>
    <recommendedName>
        <fullName evidence="1">Probable succinate transporter subunit YjjB</fullName>
    </recommendedName>
</protein>
<comment type="function">
    <text evidence="1">Involved in succinate export with YjjP. Both proteins are required for export.</text>
</comment>
<comment type="subunit">
    <text evidence="1">The transporter is composed of YjjB and YjjP.</text>
</comment>
<comment type="subcellular location">
    <subcellularLocation>
        <location evidence="1">Cell inner membrane</location>
        <topology evidence="1">Multi-pass membrane protein</topology>
    </subcellularLocation>
</comment>
<comment type="similarity">
    <text evidence="1">Belongs to the ThrE exporter (TC 2.A.79) family.</text>
</comment>
<comment type="sequence caution" evidence="2">
    <conflict type="erroneous initiation">
        <sequence resource="EMBL-CDS" id="ABB68835"/>
    </conflict>
</comment>
<dbReference type="EMBL" id="CP000036">
    <property type="protein sequence ID" value="ABB68835.1"/>
    <property type="status" value="ALT_INIT"/>
    <property type="molecule type" value="Genomic_DNA"/>
</dbReference>
<dbReference type="RefSeq" id="WP_000538175.1">
    <property type="nucleotide sequence ID" value="NC_007613.1"/>
</dbReference>
<dbReference type="KEGG" id="sbo:SBO_4423"/>
<dbReference type="HOGENOM" id="CLU_117642_1_0_6"/>
<dbReference type="Proteomes" id="UP000007067">
    <property type="component" value="Chromosome"/>
</dbReference>
<dbReference type="GO" id="GO:0005886">
    <property type="term" value="C:plasma membrane"/>
    <property type="evidence" value="ECO:0007669"/>
    <property type="project" value="UniProtKB-SubCell"/>
</dbReference>
<dbReference type="GO" id="GO:0015744">
    <property type="term" value="P:succinate transport"/>
    <property type="evidence" value="ECO:0007669"/>
    <property type="project" value="UniProtKB-UniRule"/>
</dbReference>
<dbReference type="HAMAP" id="MF_01191">
    <property type="entry name" value="YjjB"/>
    <property type="match status" value="1"/>
</dbReference>
<dbReference type="InterPro" id="IPR024528">
    <property type="entry name" value="ThrE_2"/>
</dbReference>
<dbReference type="InterPro" id="IPR050539">
    <property type="entry name" value="ThrE_Dicarb/AminoAcid_Exp"/>
</dbReference>
<dbReference type="InterPro" id="IPR020914">
    <property type="entry name" value="YjjB"/>
</dbReference>
<dbReference type="NCBIfam" id="NF007391">
    <property type="entry name" value="PRK09917.1"/>
    <property type="match status" value="1"/>
</dbReference>
<dbReference type="PANTHER" id="PTHR34390:SF1">
    <property type="entry name" value="SUCCINATE TRANSPORTER SUBUNIT YJJB-RELATED"/>
    <property type="match status" value="1"/>
</dbReference>
<dbReference type="PANTHER" id="PTHR34390">
    <property type="entry name" value="UPF0442 PROTEIN YJJB-RELATED"/>
    <property type="match status" value="1"/>
</dbReference>
<dbReference type="Pfam" id="PF12821">
    <property type="entry name" value="ThrE_2"/>
    <property type="match status" value="1"/>
</dbReference>
<sequence>MGVIEFLFALAQDMILAAIPAVGFAMVFNVPVRALRWCALLGAIGHGSRMILMTRGLNIEWSTFMASMLVGTIGIQWSRWYLAHPKVFTVAAVIPMFPGISAYTAMISAVKISQLGYSEPLMITLLTNFLTASSIVGALSIGLSIPGLWLYRKRPRV</sequence>
<keyword id="KW-0997">Cell inner membrane</keyword>
<keyword id="KW-1003">Cell membrane</keyword>
<keyword id="KW-0472">Membrane</keyword>
<keyword id="KW-0812">Transmembrane</keyword>
<keyword id="KW-1133">Transmembrane helix</keyword>
<keyword id="KW-0813">Transport</keyword>
<organism>
    <name type="scientific">Shigella boydii serotype 4 (strain Sb227)</name>
    <dbReference type="NCBI Taxonomy" id="300268"/>
    <lineage>
        <taxon>Bacteria</taxon>
        <taxon>Pseudomonadati</taxon>
        <taxon>Pseudomonadota</taxon>
        <taxon>Gammaproteobacteria</taxon>
        <taxon>Enterobacterales</taxon>
        <taxon>Enterobacteriaceae</taxon>
        <taxon>Shigella</taxon>
    </lineage>
</organism>
<name>YJJB_SHIBS</name>
<feature type="chain" id="PRO_0000293676" description="Probable succinate transporter subunit YjjB">
    <location>
        <begin position="1"/>
        <end position="157"/>
    </location>
</feature>
<feature type="transmembrane region" description="Helical" evidence="1">
    <location>
        <begin position="8"/>
        <end position="28"/>
    </location>
</feature>
<feature type="transmembrane region" description="Helical" evidence="1">
    <location>
        <begin position="57"/>
        <end position="77"/>
    </location>
</feature>
<feature type="transmembrane region" description="Helical" evidence="1">
    <location>
        <begin position="87"/>
        <end position="107"/>
    </location>
</feature>
<feature type="transmembrane region" description="Helical" evidence="1">
    <location>
        <begin position="129"/>
        <end position="149"/>
    </location>
</feature>
<accession>Q31SX3</accession>
<reference key="1">
    <citation type="journal article" date="2005" name="Nucleic Acids Res.">
        <title>Genome dynamics and diversity of Shigella species, the etiologic agents of bacillary dysentery.</title>
        <authorList>
            <person name="Yang F."/>
            <person name="Yang J."/>
            <person name="Zhang X."/>
            <person name="Chen L."/>
            <person name="Jiang Y."/>
            <person name="Yan Y."/>
            <person name="Tang X."/>
            <person name="Wang J."/>
            <person name="Xiong Z."/>
            <person name="Dong J."/>
            <person name="Xue Y."/>
            <person name="Zhu Y."/>
            <person name="Xu X."/>
            <person name="Sun L."/>
            <person name="Chen S."/>
            <person name="Nie H."/>
            <person name="Peng J."/>
            <person name="Xu J."/>
            <person name="Wang Y."/>
            <person name="Yuan Z."/>
            <person name="Wen Y."/>
            <person name="Yao Z."/>
            <person name="Shen Y."/>
            <person name="Qiang B."/>
            <person name="Hou Y."/>
            <person name="Yu J."/>
            <person name="Jin Q."/>
        </authorList>
    </citation>
    <scope>NUCLEOTIDE SEQUENCE [LARGE SCALE GENOMIC DNA]</scope>
    <source>
        <strain>Sb227</strain>
    </source>
</reference>
<gene>
    <name evidence="1" type="primary">yjjB</name>
    <name type="ordered locus">SBO_4423</name>
</gene>
<evidence type="ECO:0000255" key="1">
    <source>
        <dbReference type="HAMAP-Rule" id="MF_01191"/>
    </source>
</evidence>
<evidence type="ECO:0000305" key="2"/>
<proteinExistence type="inferred from homology"/>